<sequence>MASKNREIIKLKSSESSDMYWTVKNKRKTTGRLELKKYDRKLRRHVIFKEAK</sequence>
<accession>Q5L5W6</accession>
<name>RL33_CHLAB</name>
<protein>
    <recommendedName>
        <fullName evidence="1">Large ribosomal subunit protein bL33</fullName>
    </recommendedName>
    <alternativeName>
        <fullName evidence="2">50S ribosomal protein L33</fullName>
    </alternativeName>
</protein>
<proteinExistence type="inferred from homology"/>
<organism>
    <name type="scientific">Chlamydia abortus (strain DSM 27085 / S26/3)</name>
    <name type="common">Chlamydophila abortus</name>
    <dbReference type="NCBI Taxonomy" id="218497"/>
    <lineage>
        <taxon>Bacteria</taxon>
        <taxon>Pseudomonadati</taxon>
        <taxon>Chlamydiota</taxon>
        <taxon>Chlamydiia</taxon>
        <taxon>Chlamydiales</taxon>
        <taxon>Chlamydiaceae</taxon>
        <taxon>Chlamydia/Chlamydophila group</taxon>
        <taxon>Chlamydia</taxon>
    </lineage>
</organism>
<comment type="similarity">
    <text evidence="1">Belongs to the bacterial ribosomal protein bL33 family.</text>
</comment>
<dbReference type="EMBL" id="CR848038">
    <property type="protein sequence ID" value="CAH63965.1"/>
    <property type="molecule type" value="Genomic_DNA"/>
</dbReference>
<dbReference type="RefSeq" id="WP_006343203.1">
    <property type="nucleotide sequence ID" value="NC_004552.2"/>
</dbReference>
<dbReference type="SMR" id="Q5L5W6"/>
<dbReference type="GeneID" id="93024053"/>
<dbReference type="KEGG" id="cab:CAB513"/>
<dbReference type="eggNOG" id="COG0267">
    <property type="taxonomic scope" value="Bacteria"/>
</dbReference>
<dbReference type="HOGENOM" id="CLU_190949_1_1_0"/>
<dbReference type="OrthoDB" id="21586at2"/>
<dbReference type="Proteomes" id="UP000001012">
    <property type="component" value="Chromosome"/>
</dbReference>
<dbReference type="GO" id="GO:0022625">
    <property type="term" value="C:cytosolic large ribosomal subunit"/>
    <property type="evidence" value="ECO:0007669"/>
    <property type="project" value="TreeGrafter"/>
</dbReference>
<dbReference type="GO" id="GO:0003735">
    <property type="term" value="F:structural constituent of ribosome"/>
    <property type="evidence" value="ECO:0007669"/>
    <property type="project" value="InterPro"/>
</dbReference>
<dbReference type="GO" id="GO:0006412">
    <property type="term" value="P:translation"/>
    <property type="evidence" value="ECO:0007669"/>
    <property type="project" value="UniProtKB-UniRule"/>
</dbReference>
<dbReference type="FunFam" id="2.20.28.120:FF:000009">
    <property type="entry name" value="50S ribosomal protein L33"/>
    <property type="match status" value="1"/>
</dbReference>
<dbReference type="Gene3D" id="2.20.28.120">
    <property type="entry name" value="Ribosomal protein L33"/>
    <property type="match status" value="1"/>
</dbReference>
<dbReference type="HAMAP" id="MF_00294">
    <property type="entry name" value="Ribosomal_bL33"/>
    <property type="match status" value="1"/>
</dbReference>
<dbReference type="InterPro" id="IPR001705">
    <property type="entry name" value="Ribosomal_bL33"/>
</dbReference>
<dbReference type="InterPro" id="IPR018264">
    <property type="entry name" value="Ribosomal_bL33_CS"/>
</dbReference>
<dbReference type="InterPro" id="IPR038584">
    <property type="entry name" value="Ribosomal_bL33_sf"/>
</dbReference>
<dbReference type="InterPro" id="IPR011332">
    <property type="entry name" value="Ribosomal_zn-bd"/>
</dbReference>
<dbReference type="NCBIfam" id="NF001860">
    <property type="entry name" value="PRK00595.1"/>
    <property type="match status" value="1"/>
</dbReference>
<dbReference type="NCBIfam" id="TIGR01023">
    <property type="entry name" value="rpmG_bact"/>
    <property type="match status" value="1"/>
</dbReference>
<dbReference type="PANTHER" id="PTHR15238">
    <property type="entry name" value="54S RIBOSOMAL PROTEIN L39, MITOCHONDRIAL"/>
    <property type="match status" value="1"/>
</dbReference>
<dbReference type="PANTHER" id="PTHR15238:SF1">
    <property type="entry name" value="LARGE RIBOSOMAL SUBUNIT PROTEIN BL33M"/>
    <property type="match status" value="1"/>
</dbReference>
<dbReference type="Pfam" id="PF00471">
    <property type="entry name" value="Ribosomal_L33"/>
    <property type="match status" value="1"/>
</dbReference>
<dbReference type="SUPFAM" id="SSF57829">
    <property type="entry name" value="Zn-binding ribosomal proteins"/>
    <property type="match status" value="1"/>
</dbReference>
<dbReference type="PROSITE" id="PS00582">
    <property type="entry name" value="RIBOSOMAL_L33"/>
    <property type="match status" value="1"/>
</dbReference>
<feature type="chain" id="PRO_0000356427" description="Large ribosomal subunit protein bL33">
    <location>
        <begin position="1"/>
        <end position="52"/>
    </location>
</feature>
<gene>
    <name evidence="1" type="primary">rpmG</name>
    <name type="ordered locus">CAB513</name>
</gene>
<evidence type="ECO:0000255" key="1">
    <source>
        <dbReference type="HAMAP-Rule" id="MF_00294"/>
    </source>
</evidence>
<evidence type="ECO:0000305" key="2"/>
<reference key="1">
    <citation type="journal article" date="2005" name="Genome Res.">
        <title>The Chlamydophila abortus genome sequence reveals an array of variable proteins that contribute to interspecies variation.</title>
        <authorList>
            <person name="Thomson N.R."/>
            <person name="Yeats C."/>
            <person name="Bell K."/>
            <person name="Holden M.T.G."/>
            <person name="Bentley S.D."/>
            <person name="Livingstone M."/>
            <person name="Cerdeno-Tarraga A.-M."/>
            <person name="Harris B."/>
            <person name="Doggett J."/>
            <person name="Ormond D."/>
            <person name="Mungall K."/>
            <person name="Clarke K."/>
            <person name="Feltwell T."/>
            <person name="Hance Z."/>
            <person name="Sanders M."/>
            <person name="Quail M.A."/>
            <person name="Price C."/>
            <person name="Barrell B.G."/>
            <person name="Parkhill J."/>
            <person name="Longbottom D."/>
        </authorList>
    </citation>
    <scope>NUCLEOTIDE SEQUENCE [LARGE SCALE GENOMIC DNA]</scope>
    <source>
        <strain>DSM 27085 / S26/3</strain>
    </source>
</reference>
<keyword id="KW-0687">Ribonucleoprotein</keyword>
<keyword id="KW-0689">Ribosomal protein</keyword>